<organism>
    <name type="scientific">Pseudoalteromonas translucida (strain TAC 125)</name>
    <dbReference type="NCBI Taxonomy" id="326442"/>
    <lineage>
        <taxon>Bacteria</taxon>
        <taxon>Pseudomonadati</taxon>
        <taxon>Pseudomonadota</taxon>
        <taxon>Gammaproteobacteria</taxon>
        <taxon>Alteromonadales</taxon>
        <taxon>Pseudoalteromonadaceae</taxon>
        <taxon>Pseudoalteromonas</taxon>
    </lineage>
</organism>
<comment type="function">
    <text evidence="1">Catalyzes the formation of phosphatidylethanolamine (PtdEtn) from phosphatidylserine (PtdSer).</text>
</comment>
<comment type="catalytic activity">
    <reaction evidence="1">
        <text>a 1,2-diacyl-sn-glycero-3-phospho-L-serine + H(+) = a 1,2-diacyl-sn-glycero-3-phosphoethanolamine + CO2</text>
        <dbReference type="Rhea" id="RHEA:20828"/>
        <dbReference type="ChEBI" id="CHEBI:15378"/>
        <dbReference type="ChEBI" id="CHEBI:16526"/>
        <dbReference type="ChEBI" id="CHEBI:57262"/>
        <dbReference type="ChEBI" id="CHEBI:64612"/>
        <dbReference type="EC" id="4.1.1.65"/>
    </reaction>
</comment>
<comment type="cofactor">
    <cofactor evidence="1">
        <name>pyruvate</name>
        <dbReference type="ChEBI" id="CHEBI:15361"/>
    </cofactor>
    <text evidence="1">Binds 1 pyruvoyl group covalently per subunit.</text>
</comment>
<comment type="pathway">
    <text evidence="1">Phospholipid metabolism; phosphatidylethanolamine biosynthesis; phosphatidylethanolamine from CDP-diacylglycerol: step 2/2.</text>
</comment>
<comment type="subunit">
    <text evidence="1">Heterodimer of a large membrane-associated beta subunit and a small pyruvoyl-containing alpha subunit.</text>
</comment>
<comment type="subcellular location">
    <subcellularLocation>
        <location evidence="1">Cell membrane</location>
        <topology evidence="1">Peripheral membrane protein</topology>
    </subcellularLocation>
</comment>
<comment type="PTM">
    <text evidence="1">Is synthesized initially as an inactive proenzyme. Formation of the active enzyme involves a self-maturation process in which the active site pyruvoyl group is generated from an internal serine residue via an autocatalytic post-translational modification. Two non-identical subunits are generated from the proenzyme in this reaction, and the pyruvate is formed at the N-terminus of the alpha chain, which is derived from the carboxyl end of the proenzyme. The autoendoproteolytic cleavage occurs by a canonical serine protease mechanism, in which the side chain hydroxyl group of the serine supplies its oxygen atom to form the C-terminus of the beta chain, while the remainder of the serine residue undergoes an oxidative deamination to produce ammonia and the pyruvoyl prosthetic group on the alpha chain. During this reaction, the Ser that is part of the protease active site of the proenzyme becomes the pyruvoyl prosthetic group, which constitutes an essential element of the active site of the mature decarboxylase.</text>
</comment>
<comment type="similarity">
    <text evidence="1">Belongs to the phosphatidylserine decarboxylase family. PSD-B subfamily. Prokaryotic type I sub-subfamily.</text>
</comment>
<comment type="sequence caution" evidence="2">
    <conflict type="erroneous initiation">
        <sequence resource="EMBL-CDS" id="CAI85582"/>
    </conflict>
</comment>
<gene>
    <name evidence="1" type="primary">psd</name>
    <name type="ordered locus">PSHAa0486</name>
</gene>
<accession>Q3IFN3</accession>
<sequence>MSLDKFKIAMQYAMPKHFISRVVGKLAAAKAGVLTTTLIKLFIKQYKVDMSEAKHPDPAHYESFNEFFTRPLKDGARPIVADSDIIIHPVDGAISQLGDIVDGQLIQAKGHDYSLQALLGGNKDDTTPFLGGKFATIYLAPKDYHRIHMPIDGTLSKMIYVPGDLFSVNPLTAQNVPNLFARNERVVAIFETEIGPLAMVLVGATIVASIETIWAGTVTPPAGSDVFSWNYPTKGENAISLKKGEEMGRFKLGSTVVLAWGDDKADILDDQLPETVTRLGTPFAKIDD</sequence>
<dbReference type="EC" id="4.1.1.65" evidence="1"/>
<dbReference type="EMBL" id="CR954246">
    <property type="protein sequence ID" value="CAI85582.1"/>
    <property type="status" value="ALT_INIT"/>
    <property type="molecule type" value="Genomic_DNA"/>
</dbReference>
<dbReference type="SMR" id="Q3IFN3"/>
<dbReference type="STRING" id="326442.PSHAa0486"/>
<dbReference type="KEGG" id="pha:PSHAa0486"/>
<dbReference type="eggNOG" id="COG0688">
    <property type="taxonomic scope" value="Bacteria"/>
</dbReference>
<dbReference type="HOGENOM" id="CLU_029061_4_1_6"/>
<dbReference type="UniPathway" id="UPA00558">
    <property type="reaction ID" value="UER00616"/>
</dbReference>
<dbReference type="Proteomes" id="UP000006843">
    <property type="component" value="Chromosome I"/>
</dbReference>
<dbReference type="GO" id="GO:0005886">
    <property type="term" value="C:plasma membrane"/>
    <property type="evidence" value="ECO:0007669"/>
    <property type="project" value="UniProtKB-SubCell"/>
</dbReference>
<dbReference type="GO" id="GO:0004609">
    <property type="term" value="F:phosphatidylserine decarboxylase activity"/>
    <property type="evidence" value="ECO:0007669"/>
    <property type="project" value="UniProtKB-UniRule"/>
</dbReference>
<dbReference type="GO" id="GO:0006646">
    <property type="term" value="P:phosphatidylethanolamine biosynthetic process"/>
    <property type="evidence" value="ECO:0007669"/>
    <property type="project" value="UniProtKB-UniRule"/>
</dbReference>
<dbReference type="HAMAP" id="MF_00662">
    <property type="entry name" value="PS_decarb_PSD_B_type1"/>
    <property type="match status" value="1"/>
</dbReference>
<dbReference type="InterPro" id="IPR003817">
    <property type="entry name" value="PS_Dcarbxylase"/>
</dbReference>
<dbReference type="InterPro" id="IPR033177">
    <property type="entry name" value="PSD-B"/>
</dbReference>
<dbReference type="InterPro" id="IPR033178">
    <property type="entry name" value="PSD_type1_pro"/>
</dbReference>
<dbReference type="NCBIfam" id="TIGR00163">
    <property type="entry name" value="PS_decarb"/>
    <property type="match status" value="1"/>
</dbReference>
<dbReference type="PANTHER" id="PTHR10067">
    <property type="entry name" value="PHOSPHATIDYLSERINE DECARBOXYLASE"/>
    <property type="match status" value="1"/>
</dbReference>
<dbReference type="PANTHER" id="PTHR10067:SF6">
    <property type="entry name" value="PHOSPHATIDYLSERINE DECARBOXYLASE PROENZYME, MITOCHONDRIAL"/>
    <property type="match status" value="1"/>
</dbReference>
<dbReference type="Pfam" id="PF02666">
    <property type="entry name" value="PS_Dcarbxylase"/>
    <property type="match status" value="1"/>
</dbReference>
<name>PSD_PSET1</name>
<reference key="1">
    <citation type="journal article" date="2005" name="Genome Res.">
        <title>Coping with cold: the genome of the versatile marine Antarctica bacterium Pseudoalteromonas haloplanktis TAC125.</title>
        <authorList>
            <person name="Medigue C."/>
            <person name="Krin E."/>
            <person name="Pascal G."/>
            <person name="Barbe V."/>
            <person name="Bernsel A."/>
            <person name="Bertin P.N."/>
            <person name="Cheung F."/>
            <person name="Cruveiller S."/>
            <person name="D'Amico S."/>
            <person name="Duilio A."/>
            <person name="Fang G."/>
            <person name="Feller G."/>
            <person name="Ho C."/>
            <person name="Mangenot S."/>
            <person name="Marino G."/>
            <person name="Nilsson J."/>
            <person name="Parrilli E."/>
            <person name="Rocha E.P.C."/>
            <person name="Rouy Z."/>
            <person name="Sekowska A."/>
            <person name="Tutino M.L."/>
            <person name="Vallenet D."/>
            <person name="von Heijne G."/>
            <person name="Danchin A."/>
        </authorList>
    </citation>
    <scope>NUCLEOTIDE SEQUENCE [LARGE SCALE GENOMIC DNA]</scope>
    <source>
        <strain>TAC 125</strain>
    </source>
</reference>
<evidence type="ECO:0000255" key="1">
    <source>
        <dbReference type="HAMAP-Rule" id="MF_00662"/>
    </source>
</evidence>
<evidence type="ECO:0000305" key="2"/>
<proteinExistence type="inferred from homology"/>
<feature type="chain" id="PRO_0000262135" description="Phosphatidylserine decarboxylase beta chain" evidence="1">
    <location>
        <begin position="1"/>
        <end position="253"/>
    </location>
</feature>
<feature type="chain" id="PRO_0000262136" description="Phosphatidylserine decarboxylase alpha chain" evidence="1">
    <location>
        <begin position="254"/>
        <end position="288"/>
    </location>
</feature>
<feature type="active site" description="Charge relay system; for autoendoproteolytic cleavage activity" evidence="1">
    <location>
        <position position="91"/>
    </location>
</feature>
<feature type="active site" description="Charge relay system; for autoendoproteolytic cleavage activity" evidence="1">
    <location>
        <position position="148"/>
    </location>
</feature>
<feature type="active site" description="Charge relay system; for autoendoproteolytic cleavage activity" evidence="1">
    <location>
        <position position="254"/>
    </location>
</feature>
<feature type="active site" description="Schiff-base intermediate with substrate; via pyruvic acid; for decarboxylase activity" evidence="1">
    <location>
        <position position="254"/>
    </location>
</feature>
<feature type="site" description="Cleavage (non-hydrolytic); by autocatalysis" evidence="1">
    <location>
        <begin position="253"/>
        <end position="254"/>
    </location>
</feature>
<feature type="modified residue" description="Pyruvic acid (Ser); by autocatalysis" evidence="1">
    <location>
        <position position="254"/>
    </location>
</feature>
<protein>
    <recommendedName>
        <fullName evidence="1">Phosphatidylserine decarboxylase proenzyme</fullName>
        <ecNumber evidence="1">4.1.1.65</ecNumber>
    </recommendedName>
    <component>
        <recommendedName>
            <fullName evidence="1">Phosphatidylserine decarboxylase alpha chain</fullName>
        </recommendedName>
    </component>
    <component>
        <recommendedName>
            <fullName evidence="1">Phosphatidylserine decarboxylase beta chain</fullName>
        </recommendedName>
    </component>
</protein>
<keyword id="KW-1003">Cell membrane</keyword>
<keyword id="KW-0210">Decarboxylase</keyword>
<keyword id="KW-0444">Lipid biosynthesis</keyword>
<keyword id="KW-0443">Lipid metabolism</keyword>
<keyword id="KW-0456">Lyase</keyword>
<keyword id="KW-0472">Membrane</keyword>
<keyword id="KW-0594">Phospholipid biosynthesis</keyword>
<keyword id="KW-1208">Phospholipid metabolism</keyword>
<keyword id="KW-0670">Pyruvate</keyword>
<keyword id="KW-1185">Reference proteome</keyword>
<keyword id="KW-0865">Zymogen</keyword>